<evidence type="ECO:0000250" key="1"/>
<evidence type="ECO:0000250" key="2">
    <source>
        <dbReference type="UniProtKB" id="P0AAA9"/>
    </source>
</evidence>
<evidence type="ECO:0000305" key="3"/>
<accession>P0AAB0</accession>
<accession>P32682</accession>
<accession>Q8X6X2</accession>
<reference key="1">
    <citation type="journal article" date="2001" name="Nature">
        <title>Genome sequence of enterohaemorrhagic Escherichia coli O157:H7.</title>
        <authorList>
            <person name="Perna N.T."/>
            <person name="Plunkett G. III"/>
            <person name="Burland V."/>
            <person name="Mau B."/>
            <person name="Glasner J.D."/>
            <person name="Rose D.J."/>
            <person name="Mayhew G.F."/>
            <person name="Evans P.S."/>
            <person name="Gregor J."/>
            <person name="Kirkpatrick H.A."/>
            <person name="Posfai G."/>
            <person name="Hackett J."/>
            <person name="Klink S."/>
            <person name="Boutin A."/>
            <person name="Shao Y."/>
            <person name="Miller L."/>
            <person name="Grotbeck E.J."/>
            <person name="Davis N.W."/>
            <person name="Lim A."/>
            <person name="Dimalanta E.T."/>
            <person name="Potamousis K."/>
            <person name="Apodaca J."/>
            <person name="Anantharaman T.S."/>
            <person name="Lin J."/>
            <person name="Yen G."/>
            <person name="Schwartz D.C."/>
            <person name="Welch R.A."/>
            <person name="Blattner F.R."/>
        </authorList>
    </citation>
    <scope>NUCLEOTIDE SEQUENCE [LARGE SCALE GENOMIC DNA]</scope>
    <source>
        <strain>O157:H7 / EDL933 / ATCC 700927 / EHEC</strain>
    </source>
</reference>
<reference key="2">
    <citation type="journal article" date="2001" name="DNA Res.">
        <title>Complete genome sequence of enterohemorrhagic Escherichia coli O157:H7 and genomic comparison with a laboratory strain K-12.</title>
        <authorList>
            <person name="Hayashi T."/>
            <person name="Makino K."/>
            <person name="Ohnishi M."/>
            <person name="Kurokawa K."/>
            <person name="Ishii K."/>
            <person name="Yokoyama K."/>
            <person name="Han C.-G."/>
            <person name="Ohtsubo E."/>
            <person name="Nakayama K."/>
            <person name="Murata T."/>
            <person name="Tanaka M."/>
            <person name="Tobe T."/>
            <person name="Iida T."/>
            <person name="Takami H."/>
            <person name="Honda T."/>
            <person name="Sasakawa C."/>
            <person name="Ogasawara N."/>
            <person name="Yasunaga T."/>
            <person name="Kuhara S."/>
            <person name="Shiba T."/>
            <person name="Hattori M."/>
            <person name="Shinagawa H."/>
        </authorList>
    </citation>
    <scope>NUCLEOTIDE SEQUENCE [LARGE SCALE GENOMIC DNA]</scope>
    <source>
        <strain>O157:H7 / Sakai / RIMD 0509952 / EHEC</strain>
    </source>
</reference>
<comment type="function">
    <text evidence="2">Part of the Zra signaling pathway, an envelope stress response (ESR) system composed of the periplasmic accessory protein ZraP, the histidine kinase ZraS and the transcriptional regulator ZraR. The ZraPSR system contributes to antibiotic resistance and is important for membrane integrity in the presence of membrane-targeting biocides. ZraP acts as a modulator which has both a regulatory and a chaperone function. The zinc-bound form of ZraP modulates the response of the ZraPSR system by inhibiting the expression of the zra genes, probably by interacting with ZraS.</text>
</comment>
<comment type="subcellular location">
    <subcellularLocation>
        <location evidence="2">Periplasm</location>
    </subcellularLocation>
</comment>
<comment type="similarity">
    <text evidence="3">Belongs to the ZraP family.</text>
</comment>
<comment type="sequence caution" evidence="3">
    <conflict type="erroneous initiation">
        <sequence resource="EMBL-CDS" id="AAG59199"/>
    </conflict>
    <text>Extended N-terminus.</text>
</comment>
<sequence>MKRNTKIALVMMALSAMAMGSTSAFAHGGHGMWQQNAAPLTSEQQTAWQKIHNDFYAQSSALQQQLVTKRYEYNALLAANPPDSSKINAVAKEMENLRQSLDELRVKRDIAMAEAGIPRGAGMGMGYGGCGGGGHMGMGHW</sequence>
<protein>
    <recommendedName>
        <fullName evidence="2">Signaling pathway modulator ZraP</fullName>
    </recommendedName>
    <alternativeName>
        <fullName>Zinc resistance-associated protein</fullName>
    </alternativeName>
</protein>
<gene>
    <name type="primary">zraP</name>
    <name type="ordered locus">Z5578</name>
    <name type="ordered locus">ECs4925</name>
</gene>
<proteinExistence type="inferred from homology"/>
<dbReference type="EMBL" id="AE005174">
    <property type="protein sequence ID" value="AAG59199.1"/>
    <property type="status" value="ALT_INIT"/>
    <property type="molecule type" value="Genomic_DNA"/>
</dbReference>
<dbReference type="EMBL" id="BA000007">
    <property type="protein sequence ID" value="BAB38348.2"/>
    <property type="molecule type" value="Genomic_DNA"/>
</dbReference>
<dbReference type="RefSeq" id="NP_312952.2">
    <property type="nucleotide sequence ID" value="NC_002695.1"/>
</dbReference>
<dbReference type="RefSeq" id="WP_000828222.1">
    <property type="nucleotide sequence ID" value="NZ_VOAI01000037.1"/>
</dbReference>
<dbReference type="SMR" id="P0AAB0"/>
<dbReference type="STRING" id="155864.Z5578"/>
<dbReference type="GeneID" id="915713"/>
<dbReference type="GeneID" id="93777892"/>
<dbReference type="KEGG" id="ece:Z5578"/>
<dbReference type="KEGG" id="ecs:ECs_4925"/>
<dbReference type="PATRIC" id="fig|386585.9.peg.5150"/>
<dbReference type="eggNOG" id="COG3678">
    <property type="taxonomic scope" value="Bacteria"/>
</dbReference>
<dbReference type="HOGENOM" id="CLU_124884_0_0_6"/>
<dbReference type="OMA" id="GMGYGDC"/>
<dbReference type="Proteomes" id="UP000000558">
    <property type="component" value="Chromosome"/>
</dbReference>
<dbReference type="Proteomes" id="UP000002519">
    <property type="component" value="Chromosome"/>
</dbReference>
<dbReference type="GO" id="GO:0042597">
    <property type="term" value="C:periplasmic space"/>
    <property type="evidence" value="ECO:0007669"/>
    <property type="project" value="UniProtKB-SubCell"/>
</dbReference>
<dbReference type="FunFam" id="1.20.120.1490:FF:000003">
    <property type="entry name" value="Zinc resistance-associated protein"/>
    <property type="match status" value="1"/>
</dbReference>
<dbReference type="Gene3D" id="1.20.120.1490">
    <property type="match status" value="1"/>
</dbReference>
<dbReference type="InterPro" id="IPR025961">
    <property type="entry name" value="Metal_resist"/>
</dbReference>
<dbReference type="NCBIfam" id="NF008584">
    <property type="entry name" value="PRK11546.1"/>
    <property type="match status" value="1"/>
</dbReference>
<dbReference type="Pfam" id="PF13801">
    <property type="entry name" value="Metal_resist"/>
    <property type="match status" value="1"/>
</dbReference>
<organism>
    <name type="scientific">Escherichia coli O157:H7</name>
    <dbReference type="NCBI Taxonomy" id="83334"/>
    <lineage>
        <taxon>Bacteria</taxon>
        <taxon>Pseudomonadati</taxon>
        <taxon>Pseudomonadota</taxon>
        <taxon>Gammaproteobacteria</taxon>
        <taxon>Enterobacterales</taxon>
        <taxon>Enterobacteriaceae</taxon>
        <taxon>Escherichia</taxon>
    </lineage>
</organism>
<feature type="signal peptide" evidence="1">
    <location>
        <begin position="1"/>
        <end position="26"/>
    </location>
</feature>
<feature type="chain" id="PRO_0000041881" description="Signaling pathway modulator ZraP">
    <location>
        <begin position="27"/>
        <end position="141"/>
    </location>
</feature>
<keyword id="KW-0574">Periplasm</keyword>
<keyword id="KW-1185">Reference proteome</keyword>
<keyword id="KW-0732">Signal</keyword>
<keyword id="KW-0346">Stress response</keyword>
<keyword id="KW-0862">Zinc</keyword>
<name>ZRAP_ECO57</name>